<dbReference type="EMBL" id="AAFW02000153">
    <property type="protein sequence ID" value="EDN59814.1"/>
    <property type="molecule type" value="Genomic_DNA"/>
</dbReference>
<dbReference type="SMR" id="A7A075"/>
<dbReference type="HOGENOM" id="CLU_111217_0_0_1"/>
<dbReference type="OrthoDB" id="39322at4893"/>
<dbReference type="Proteomes" id="UP000007060">
    <property type="component" value="Unassembled WGS sequence"/>
</dbReference>
<dbReference type="GO" id="GO:0005634">
    <property type="term" value="C:nucleus"/>
    <property type="evidence" value="ECO:0007669"/>
    <property type="project" value="UniProtKB-SubCell"/>
</dbReference>
<dbReference type="GO" id="GO:0003677">
    <property type="term" value="F:DNA binding"/>
    <property type="evidence" value="ECO:0007669"/>
    <property type="project" value="UniProtKB-KW"/>
</dbReference>
<dbReference type="GO" id="GO:0003723">
    <property type="term" value="F:RNA binding"/>
    <property type="evidence" value="ECO:0007669"/>
    <property type="project" value="UniProtKB-KW"/>
</dbReference>
<dbReference type="GO" id="GO:0051028">
    <property type="term" value="P:mRNA transport"/>
    <property type="evidence" value="ECO:0007669"/>
    <property type="project" value="UniProtKB-KW"/>
</dbReference>
<dbReference type="CDD" id="cd12295">
    <property type="entry name" value="RRM_YRA2"/>
    <property type="match status" value="1"/>
</dbReference>
<dbReference type="FunFam" id="3.30.70.330:FF:000793">
    <property type="entry name" value="RNA annealing protein YRA2"/>
    <property type="match status" value="1"/>
</dbReference>
<dbReference type="Gene3D" id="3.30.70.330">
    <property type="match status" value="1"/>
</dbReference>
<dbReference type="InterPro" id="IPR025715">
    <property type="entry name" value="FoP_C"/>
</dbReference>
<dbReference type="InterPro" id="IPR012677">
    <property type="entry name" value="Nucleotide-bd_a/b_plait_sf"/>
</dbReference>
<dbReference type="InterPro" id="IPR035979">
    <property type="entry name" value="RBD_domain_sf"/>
</dbReference>
<dbReference type="InterPro" id="IPR000504">
    <property type="entry name" value="RRM_dom"/>
</dbReference>
<dbReference type="InterPro" id="IPR034396">
    <property type="entry name" value="Yra2_RRM"/>
</dbReference>
<dbReference type="Pfam" id="PF13865">
    <property type="entry name" value="FoP_duplication"/>
    <property type="match status" value="1"/>
</dbReference>
<dbReference type="Pfam" id="PF00076">
    <property type="entry name" value="RRM_1"/>
    <property type="match status" value="1"/>
</dbReference>
<dbReference type="SMART" id="SM00360">
    <property type="entry name" value="RRM"/>
    <property type="match status" value="1"/>
</dbReference>
<dbReference type="SUPFAM" id="SSF54928">
    <property type="entry name" value="RNA-binding domain, RBD"/>
    <property type="match status" value="1"/>
</dbReference>
<dbReference type="PROSITE" id="PS50102">
    <property type="entry name" value="RRM"/>
    <property type="match status" value="1"/>
</dbReference>
<organism>
    <name type="scientific">Saccharomyces cerevisiae (strain YJM789)</name>
    <name type="common">Baker's yeast</name>
    <dbReference type="NCBI Taxonomy" id="307796"/>
    <lineage>
        <taxon>Eukaryota</taxon>
        <taxon>Fungi</taxon>
        <taxon>Dikarya</taxon>
        <taxon>Ascomycota</taxon>
        <taxon>Saccharomycotina</taxon>
        <taxon>Saccharomycetes</taxon>
        <taxon>Saccharomycetales</taxon>
        <taxon>Saccharomycetaceae</taxon>
        <taxon>Saccharomyces</taxon>
    </lineage>
</organism>
<name>YRA2_YEAS7</name>
<reference key="1">
    <citation type="journal article" date="2007" name="Proc. Natl. Acad. Sci. U.S.A.">
        <title>Genome sequencing and comparative analysis of Saccharomyces cerevisiae strain YJM789.</title>
        <authorList>
            <person name="Wei W."/>
            <person name="McCusker J.H."/>
            <person name="Hyman R.W."/>
            <person name="Jones T."/>
            <person name="Ning Y."/>
            <person name="Cao Z."/>
            <person name="Gu Z."/>
            <person name="Bruno D."/>
            <person name="Miranda M."/>
            <person name="Nguyen M."/>
            <person name="Wilhelmy J."/>
            <person name="Komp C."/>
            <person name="Tamse R."/>
            <person name="Wang X."/>
            <person name="Jia P."/>
            <person name="Luedi P."/>
            <person name="Oefner P.J."/>
            <person name="David L."/>
            <person name="Dietrich F.S."/>
            <person name="Li Y."/>
            <person name="Davis R.W."/>
            <person name="Steinmetz L.M."/>
        </authorList>
    </citation>
    <scope>NUCLEOTIDE SEQUENCE [LARGE SCALE GENOMIC DNA]</scope>
    <source>
        <strain>YJM789</strain>
    </source>
</reference>
<keyword id="KW-0007">Acetylation</keyword>
<keyword id="KW-0238">DNA-binding</keyword>
<keyword id="KW-0509">mRNA transport</keyword>
<keyword id="KW-0539">Nucleus</keyword>
<keyword id="KW-0694">RNA-binding</keyword>
<keyword id="KW-0813">Transport</keyword>
<protein>
    <recommendedName>
        <fullName>RNA annealing protein YRA2</fullName>
    </recommendedName>
</protein>
<comment type="function">
    <text evidence="1">Involved in export of poly(A) mRNAs from the nucleus. Recruited to the coding sequences as well as poly-A sites of active genes (By similarity).</text>
</comment>
<comment type="subunit">
    <text evidence="1">Associates with mRNPs. Interacts with YRA1.</text>
</comment>
<comment type="subcellular location">
    <subcellularLocation>
        <location evidence="1">Nucleus</location>
    </subcellularLocation>
</comment>
<comment type="similarity">
    <text evidence="5">Belongs to the YRA1 family.</text>
</comment>
<evidence type="ECO:0000250" key="1"/>
<evidence type="ECO:0000250" key="2">
    <source>
        <dbReference type="UniProtKB" id="P36036"/>
    </source>
</evidence>
<evidence type="ECO:0000255" key="3">
    <source>
        <dbReference type="PROSITE-ProRule" id="PRU00176"/>
    </source>
</evidence>
<evidence type="ECO:0000256" key="4">
    <source>
        <dbReference type="SAM" id="MobiDB-lite"/>
    </source>
</evidence>
<evidence type="ECO:0000305" key="5"/>
<feature type="chain" id="PRO_0000409545" description="RNA annealing protein YRA2">
    <location>
        <begin position="1"/>
        <end position="203"/>
    </location>
</feature>
<feature type="domain" description="RRM" evidence="3">
    <location>
        <begin position="64"/>
        <end position="138"/>
    </location>
</feature>
<feature type="region of interest" description="Disordered" evidence="4">
    <location>
        <begin position="1"/>
        <end position="60"/>
    </location>
</feature>
<feature type="region of interest" description="Disordered" evidence="4">
    <location>
        <begin position="137"/>
        <end position="203"/>
    </location>
</feature>
<feature type="compositionally biased region" description="Polar residues" evidence="4">
    <location>
        <begin position="11"/>
        <end position="20"/>
    </location>
</feature>
<feature type="compositionally biased region" description="Basic and acidic residues" evidence="4">
    <location>
        <begin position="47"/>
        <end position="60"/>
    </location>
</feature>
<feature type="compositionally biased region" description="Basic residues" evidence="4">
    <location>
        <begin position="139"/>
        <end position="153"/>
    </location>
</feature>
<feature type="compositionally biased region" description="Basic and acidic residues" evidence="4">
    <location>
        <begin position="154"/>
        <end position="164"/>
    </location>
</feature>
<feature type="compositionally biased region" description="Basic residues" evidence="4">
    <location>
        <begin position="165"/>
        <end position="180"/>
    </location>
</feature>
<feature type="modified residue" description="N-acetylmethionine" evidence="2">
    <location>
        <position position="1"/>
    </location>
</feature>
<sequence length="203" mass="23836">MDKAFDEIIGNSHTDSSSNHKVTRYRRRDLRNELGPRLGFAPSDAASRSKDRLYREREEPPLPKRIRISKIPLDVSDYTLDDMIKEFGSPIFSKIFDNKEDRTCIYEFEDPEVLEKIVERYNGHELHNAKIEVEIYQPQRKHSRMNAHNRRKQTAQEHGRDRPGSHYRQKPNRVSKKNKGREKNNTPTSVEALDAELDAYMKG</sequence>
<accession>A7A075</accession>
<proteinExistence type="inferred from homology"/>
<gene>
    <name type="primary">YRA2</name>
    <name type="ORF">SCY_3485</name>
</gene>